<gene>
    <name evidence="1" type="primary">pyrB</name>
    <name type="ordered locus">PA0402</name>
</gene>
<proteinExistence type="inferred from homology"/>
<comment type="function">
    <text evidence="1">Catalyzes the condensation of carbamoyl phosphate and aspartate to form carbamoyl aspartate and inorganic phosphate, the committed step in the de novo pyrimidine nucleotide biosynthesis pathway.</text>
</comment>
<comment type="catalytic activity">
    <reaction evidence="1">
        <text>carbamoyl phosphate + L-aspartate = N-carbamoyl-L-aspartate + phosphate + H(+)</text>
        <dbReference type="Rhea" id="RHEA:20013"/>
        <dbReference type="ChEBI" id="CHEBI:15378"/>
        <dbReference type="ChEBI" id="CHEBI:29991"/>
        <dbReference type="ChEBI" id="CHEBI:32814"/>
        <dbReference type="ChEBI" id="CHEBI:43474"/>
        <dbReference type="ChEBI" id="CHEBI:58228"/>
        <dbReference type="EC" id="2.1.3.2"/>
    </reaction>
</comment>
<comment type="pathway">
    <text evidence="1">Pyrimidine metabolism; UMP biosynthesis via de novo pathway; (S)-dihydroorotate from bicarbonate: step 2/3.</text>
</comment>
<comment type="subunit">
    <text evidence="1">Heterododecamer (2C3:3R2) of six catalytic PyrB chains organized as two trimers (C3), and six regulatory PyrI chains organized as three dimers (R2).</text>
</comment>
<comment type="similarity">
    <text evidence="1 2">Belongs to the aspartate/ornithine carbamoyltransferase superfamily. ATCase family.</text>
</comment>
<keyword id="KW-0665">Pyrimidine biosynthesis</keyword>
<keyword id="KW-1185">Reference proteome</keyword>
<keyword id="KW-0808">Transferase</keyword>
<evidence type="ECO:0000255" key="1">
    <source>
        <dbReference type="HAMAP-Rule" id="MF_00001"/>
    </source>
</evidence>
<evidence type="ECO:0000305" key="2"/>
<accession>Q59653</accession>
<reference key="1">
    <citation type="submission" date="1993-06" db="EMBL/GenBank/DDBJ databases">
        <authorList>
            <person name="Vickrey J.F."/>
            <person name="Schurr M.J."/>
            <person name="Benjamin R.C."/>
            <person name="Cunin R."/>
            <person name="Shanley M.S."/>
            <person name="O'Donovan G.A."/>
        </authorList>
    </citation>
    <scope>NUCLEOTIDE SEQUENCE [GENOMIC DNA]</scope>
    <source>
        <strain>ATCC 15692 / DSM 22644 / CIP 104116 / JCM 14847 / LMG 12228 / 1C / PRS 101 / PAO1</strain>
    </source>
</reference>
<reference key="2">
    <citation type="journal article" date="2000" name="Nature">
        <title>Complete genome sequence of Pseudomonas aeruginosa PAO1, an opportunistic pathogen.</title>
        <authorList>
            <person name="Stover C.K."/>
            <person name="Pham X.-Q.T."/>
            <person name="Erwin A.L."/>
            <person name="Mizoguchi S.D."/>
            <person name="Warrener P."/>
            <person name="Hickey M.J."/>
            <person name="Brinkman F.S.L."/>
            <person name="Hufnagle W.O."/>
            <person name="Kowalik D.J."/>
            <person name="Lagrou M."/>
            <person name="Garber R.L."/>
            <person name="Goltry L."/>
            <person name="Tolentino E."/>
            <person name="Westbrock-Wadman S."/>
            <person name="Yuan Y."/>
            <person name="Brody L.L."/>
            <person name="Coulter S.N."/>
            <person name="Folger K.R."/>
            <person name="Kas A."/>
            <person name="Larbig K."/>
            <person name="Lim R.M."/>
            <person name="Smith K.A."/>
            <person name="Spencer D.H."/>
            <person name="Wong G.K.-S."/>
            <person name="Wu Z."/>
            <person name="Paulsen I.T."/>
            <person name="Reizer J."/>
            <person name="Saier M.H. Jr."/>
            <person name="Hancock R.E.W."/>
            <person name="Lory S."/>
            <person name="Olson M.V."/>
        </authorList>
    </citation>
    <scope>NUCLEOTIDE SEQUENCE [LARGE SCALE GENOMIC DNA]</scope>
    <source>
        <strain>ATCC 15692 / DSM 22644 / CIP 104116 / JCM 14847 / LMG 12228 / 1C / PRS 101 / PAO1</strain>
    </source>
</reference>
<sequence length="334" mass="36629">MPTDAKRPLQLNDQGQLRHFISLDGLPRELLTEILDTADSFLEVGARAVKKVPLLRGKTVCNVFFENSTRTRTTFELAAQRLSADVISLNVSTSSTSKGETLTDTLRNLEAMAADMFVVRHSDSGAAHFIAEHVSPNVAVINGGDGRHAHPTQGMLDMLTIRRHKGNFEQLSVAIVGDILHSRVARSNMLALKTLGCPDIRVIAPRTLLPIGLEEQYGVRVFTNADEGLKDVDVVIMLRLQRERMQGGLLPSEGEFFKLYGLTEKRLKLAKPDAIVMHPGPINRGVEIESAVADGAQSVILNQVTYGIAIRMAVLSMAMSGQNTQRQLEQEDAE</sequence>
<organism>
    <name type="scientific">Pseudomonas aeruginosa (strain ATCC 15692 / DSM 22644 / CIP 104116 / JCM 14847 / LMG 12228 / 1C / PRS 101 / PAO1)</name>
    <dbReference type="NCBI Taxonomy" id="208964"/>
    <lineage>
        <taxon>Bacteria</taxon>
        <taxon>Pseudomonadati</taxon>
        <taxon>Pseudomonadota</taxon>
        <taxon>Gammaproteobacteria</taxon>
        <taxon>Pseudomonadales</taxon>
        <taxon>Pseudomonadaceae</taxon>
        <taxon>Pseudomonas</taxon>
    </lineage>
</organism>
<name>PYRB_PSEAE</name>
<dbReference type="EC" id="2.1.3.2" evidence="1"/>
<dbReference type="EMBL" id="L19649">
    <property type="protein sequence ID" value="AAA25976.1"/>
    <property type="molecule type" value="Genomic_DNA"/>
</dbReference>
<dbReference type="EMBL" id="AE004091">
    <property type="protein sequence ID" value="AAG03791.1"/>
    <property type="molecule type" value="Genomic_DNA"/>
</dbReference>
<dbReference type="PIR" id="H83595">
    <property type="entry name" value="H83595"/>
</dbReference>
<dbReference type="RefSeq" id="NP_249093.1">
    <property type="nucleotide sequence ID" value="NC_002516.2"/>
</dbReference>
<dbReference type="RefSeq" id="WP_003084569.1">
    <property type="nucleotide sequence ID" value="NZ_QZGE01000016.1"/>
</dbReference>
<dbReference type="SMR" id="Q59653"/>
<dbReference type="FunCoup" id="Q59653">
    <property type="interactions" value="699"/>
</dbReference>
<dbReference type="STRING" id="208964.PA0402"/>
<dbReference type="PaxDb" id="208964-PA0402"/>
<dbReference type="DNASU" id="878267"/>
<dbReference type="GeneID" id="878267"/>
<dbReference type="KEGG" id="pae:PA0402"/>
<dbReference type="PATRIC" id="fig|208964.12.peg.423"/>
<dbReference type="PseudoCAP" id="PA0402"/>
<dbReference type="HOGENOM" id="CLU_043846_2_0_6"/>
<dbReference type="InParanoid" id="Q59653"/>
<dbReference type="OrthoDB" id="9774690at2"/>
<dbReference type="PhylomeDB" id="Q59653"/>
<dbReference type="BioCyc" id="PAER208964:G1FZ6-406-MONOMER"/>
<dbReference type="UniPathway" id="UPA00070">
    <property type="reaction ID" value="UER00116"/>
</dbReference>
<dbReference type="Proteomes" id="UP000002438">
    <property type="component" value="Chromosome"/>
</dbReference>
<dbReference type="GO" id="GO:0016597">
    <property type="term" value="F:amino acid binding"/>
    <property type="evidence" value="ECO:0007669"/>
    <property type="project" value="InterPro"/>
</dbReference>
<dbReference type="GO" id="GO:0004070">
    <property type="term" value="F:aspartate carbamoyltransferase activity"/>
    <property type="evidence" value="ECO:0007669"/>
    <property type="project" value="UniProtKB-UniRule"/>
</dbReference>
<dbReference type="GO" id="GO:0006207">
    <property type="term" value="P:'de novo' pyrimidine nucleobase biosynthetic process"/>
    <property type="evidence" value="ECO:0007669"/>
    <property type="project" value="InterPro"/>
</dbReference>
<dbReference type="GO" id="GO:0044205">
    <property type="term" value="P:'de novo' UMP biosynthetic process"/>
    <property type="evidence" value="ECO:0007669"/>
    <property type="project" value="UniProtKB-UniRule"/>
</dbReference>
<dbReference type="GO" id="GO:0006520">
    <property type="term" value="P:amino acid metabolic process"/>
    <property type="evidence" value="ECO:0007669"/>
    <property type="project" value="InterPro"/>
</dbReference>
<dbReference type="FunFam" id="3.40.50.1370:FF:000006">
    <property type="entry name" value="Aspartate carbamoyltransferase"/>
    <property type="match status" value="1"/>
</dbReference>
<dbReference type="FunFam" id="3.40.50.1370:FF:000007">
    <property type="entry name" value="Aspartate carbamoyltransferase"/>
    <property type="match status" value="1"/>
</dbReference>
<dbReference type="Gene3D" id="3.40.50.1370">
    <property type="entry name" value="Aspartate/ornithine carbamoyltransferase"/>
    <property type="match status" value="2"/>
</dbReference>
<dbReference type="HAMAP" id="MF_00001">
    <property type="entry name" value="Asp_carb_tr"/>
    <property type="match status" value="1"/>
</dbReference>
<dbReference type="InterPro" id="IPR006132">
    <property type="entry name" value="Asp/Orn_carbamoyltranf_P-bd"/>
</dbReference>
<dbReference type="InterPro" id="IPR006130">
    <property type="entry name" value="Asp/Orn_carbamoylTrfase"/>
</dbReference>
<dbReference type="InterPro" id="IPR036901">
    <property type="entry name" value="Asp/Orn_carbamoylTrfase_sf"/>
</dbReference>
<dbReference type="InterPro" id="IPR002082">
    <property type="entry name" value="Asp_carbamoyltransf"/>
</dbReference>
<dbReference type="InterPro" id="IPR006131">
    <property type="entry name" value="Asp_carbamoyltransf_Asp/Orn-bd"/>
</dbReference>
<dbReference type="NCBIfam" id="TIGR00670">
    <property type="entry name" value="asp_carb_tr"/>
    <property type="match status" value="1"/>
</dbReference>
<dbReference type="NCBIfam" id="NF002032">
    <property type="entry name" value="PRK00856.1"/>
    <property type="match status" value="1"/>
</dbReference>
<dbReference type="PANTHER" id="PTHR45753:SF6">
    <property type="entry name" value="ASPARTATE CARBAMOYLTRANSFERASE"/>
    <property type="match status" value="1"/>
</dbReference>
<dbReference type="PANTHER" id="PTHR45753">
    <property type="entry name" value="ORNITHINE CARBAMOYLTRANSFERASE, MITOCHONDRIAL"/>
    <property type="match status" value="1"/>
</dbReference>
<dbReference type="Pfam" id="PF00185">
    <property type="entry name" value="OTCace"/>
    <property type="match status" value="1"/>
</dbReference>
<dbReference type="Pfam" id="PF02729">
    <property type="entry name" value="OTCace_N"/>
    <property type="match status" value="1"/>
</dbReference>
<dbReference type="PRINTS" id="PR00100">
    <property type="entry name" value="AOTCASE"/>
</dbReference>
<dbReference type="PRINTS" id="PR00101">
    <property type="entry name" value="ATCASE"/>
</dbReference>
<dbReference type="SUPFAM" id="SSF53671">
    <property type="entry name" value="Aspartate/ornithine carbamoyltransferase"/>
    <property type="match status" value="1"/>
</dbReference>
<dbReference type="PROSITE" id="PS00097">
    <property type="entry name" value="CARBAMOYLTRANSFERASE"/>
    <property type="match status" value="1"/>
</dbReference>
<protein>
    <recommendedName>
        <fullName evidence="1">Aspartate carbamoyltransferase catalytic subunit</fullName>
        <ecNumber evidence="1">2.1.3.2</ecNumber>
    </recommendedName>
    <alternativeName>
        <fullName evidence="1">Aspartate transcarbamylase</fullName>
        <shortName evidence="1">ATCase</shortName>
    </alternativeName>
</protein>
<feature type="chain" id="PRO_0000113176" description="Aspartate carbamoyltransferase catalytic subunit">
    <location>
        <begin position="1"/>
        <end position="334"/>
    </location>
</feature>
<feature type="binding site" evidence="1">
    <location>
        <position position="70"/>
    </location>
    <ligand>
        <name>carbamoyl phosphate</name>
        <dbReference type="ChEBI" id="CHEBI:58228"/>
    </ligand>
</feature>
<feature type="binding site" evidence="1">
    <location>
        <position position="71"/>
    </location>
    <ligand>
        <name>carbamoyl phosphate</name>
        <dbReference type="ChEBI" id="CHEBI:58228"/>
    </ligand>
</feature>
<feature type="binding site" evidence="1">
    <location>
        <position position="98"/>
    </location>
    <ligand>
        <name>L-aspartate</name>
        <dbReference type="ChEBI" id="CHEBI:29991"/>
    </ligand>
</feature>
<feature type="binding site" evidence="1">
    <location>
        <position position="120"/>
    </location>
    <ligand>
        <name>carbamoyl phosphate</name>
        <dbReference type="ChEBI" id="CHEBI:58228"/>
    </ligand>
</feature>
<feature type="binding site" evidence="1">
    <location>
        <position position="150"/>
    </location>
    <ligand>
        <name>carbamoyl phosphate</name>
        <dbReference type="ChEBI" id="CHEBI:58228"/>
    </ligand>
</feature>
<feature type="binding site" evidence="1">
    <location>
        <position position="153"/>
    </location>
    <ligand>
        <name>carbamoyl phosphate</name>
        <dbReference type="ChEBI" id="CHEBI:58228"/>
    </ligand>
</feature>
<feature type="binding site" evidence="1">
    <location>
        <position position="183"/>
    </location>
    <ligand>
        <name>L-aspartate</name>
        <dbReference type="ChEBI" id="CHEBI:29991"/>
    </ligand>
</feature>
<feature type="binding site" evidence="1">
    <location>
        <position position="239"/>
    </location>
    <ligand>
        <name>L-aspartate</name>
        <dbReference type="ChEBI" id="CHEBI:29991"/>
    </ligand>
</feature>
<feature type="binding site" evidence="1">
    <location>
        <position position="280"/>
    </location>
    <ligand>
        <name>carbamoyl phosphate</name>
        <dbReference type="ChEBI" id="CHEBI:58228"/>
    </ligand>
</feature>
<feature type="binding site" evidence="1">
    <location>
        <position position="281"/>
    </location>
    <ligand>
        <name>carbamoyl phosphate</name>
        <dbReference type="ChEBI" id="CHEBI:58228"/>
    </ligand>
</feature>
<feature type="sequence conflict" description="In Ref. 1; AAA25976." evidence="2" ref="1">
    <original>R</original>
    <variation>A</variation>
    <location>
        <position position="206"/>
    </location>
</feature>